<organism>
    <name type="scientific">Arabidopsis thaliana</name>
    <name type="common">Mouse-ear cress</name>
    <dbReference type="NCBI Taxonomy" id="3702"/>
    <lineage>
        <taxon>Eukaryota</taxon>
        <taxon>Viridiplantae</taxon>
        <taxon>Streptophyta</taxon>
        <taxon>Embryophyta</taxon>
        <taxon>Tracheophyta</taxon>
        <taxon>Spermatophyta</taxon>
        <taxon>Magnoliopsida</taxon>
        <taxon>eudicotyledons</taxon>
        <taxon>Gunneridae</taxon>
        <taxon>Pentapetalae</taxon>
        <taxon>rosids</taxon>
        <taxon>malvids</taxon>
        <taxon>Brassicales</taxon>
        <taxon>Brassicaceae</taxon>
        <taxon>Camelineae</taxon>
        <taxon>Arabidopsis</taxon>
    </lineage>
</organism>
<comment type="function">
    <text evidence="1 10">May function as histone H3 lysine demethylase and be involved in regulation of gene expression (By similarity). Regulates flowering time by promoting CONSTANS (CO) and CONSTANS-LIKE genes (e.g. COL2 and COL5) expression via interaction with FBH transcription factors (FBH1, FBH2, FBH3 and FBH4) at their loci to remove H3K9me2 repressive histone marks (PubMed:33604650). Also modulates the expression of several developmental genes such as MYB30, TFS1, AGL6 and RVE2 (PubMed:33604650).</text>
</comment>
<comment type="cofactor">
    <cofactor evidence="2">
        <name>Fe(2+)</name>
        <dbReference type="ChEBI" id="CHEBI:29033"/>
    </cofactor>
    <text evidence="2">Binds 1 Fe(2+) ion per subunit.</text>
</comment>
<comment type="subunit">
    <text evidence="10">Interacts with the FBH transcription factors FBH1, FBH2, FBH3 and FBH4.</text>
</comment>
<comment type="subcellular location">
    <subcellularLocation>
        <location evidence="5 10">Nucleus</location>
    </subcellularLocation>
</comment>
<comment type="tissue specificity">
    <text evidence="8 10">Expressed in inflorescences, flowers, roots, siliques, leaves and stems, especially in the vasculature (mainly phloem), with highest levels in floral organs (PubMed:18713399). Present at high levels in flowers, shoot apex and young seeds, but observed at low levels in dry seeds, root apex and anthers (PubMed:33604650).</text>
</comment>
<comment type="induction">
    <text evidence="10">Follows a circadian cycle with lower levels in the early morning and highest accumulation in the middle of the day.</text>
</comment>
<comment type="disruption phenotype">
    <text evidence="9 10">No visible phenotype (PubMed:28400174). Decreased hypocotyl length (PubMed:33604650). Delayed flowering associated with reduced FLOWERING LOCUS T (FT) and CONSTANS (CO) levels due to increased H3K9me1/2 level at CO locus (PubMed:33604650).</text>
</comment>
<comment type="similarity">
    <text evidence="12">Belongs to the JARID1 histone demethylase family.</text>
</comment>
<comment type="sequence caution" evidence="12">
    <conflict type="erroneous gene model prediction">
        <sequence resource="EMBL-CDS" id="CAA18707"/>
    </conflict>
</comment>
<comment type="sequence caution" evidence="12">
    <conflict type="erroneous gene model prediction">
        <sequence resource="EMBL-CDS" id="CAA20208"/>
    </conflict>
</comment>
<comment type="sequence caution" evidence="12">
    <conflict type="erroneous gene model prediction">
        <sequence resource="EMBL-CDS" id="CAB81250"/>
    </conflict>
</comment>
<sequence length="927" mass="105143">MSENEIVPDEFRCNRSDGKQWRCKRRALEGKKMCESHHSQQSLKRSKQKVAESSKLVRSRRGGGDEVASSEIEPNESRIRSKRLGKSKRKRVMGEAEAMDEAVKKMKLKRGDLQLDLIRMVLKREVEKRKRLPNSNNKKKSNGGFSEFVGEELTRVLPNGIMAISPPSPTTSNVSSPCDVKVGEEPISMIKRRFRSKNIEPLPIGKMQVVPFKGDLVNGRKEKKMRCHWCGTRGFGDLISCLSCEREFFCIDCIEKRNKGSKEEVEKKCPVCRGSCRCKVCSVTNSGVTECKDSQSVRSDIDRVLHLHYAVCMLLPVLKEINAEHKVEVENDAEKKEGNPAEPQIHSSELTSDDRQPCSNGRDFAVVDLQRMCTRSSSVLRLNSDQDQSQESLSRKVGSVKCSNGIKSPKVCKRKEVKGCSNNLFLSLFPLELTSKLEISAEEVVSCYELPEILDKYSGCPFCIGMETQSSSSDSHLKEASKTREDGTGNFLYYPTVLDFHQNNLEHFQTHWSKGHPVIVRSVIKSGSSLNWDPVALFCHYLMNRNNKTGNTTDCMDWFEVEIGVKQFFLGSLRGKAETNTCQERLKLEGWLSSSLFKEQFPNHYAEILNILPISHYMDPKRGLLNIAANLPDTVQPPDFGPCLNISYRSGEEYAQPDSVKKLGFETCDMVDILLYVTETPVSTNQICRIRKLMKNIGRVRSKNPAKGRESRFDKGKKRDRLDDYSSSDSESSQHCLGAKCRGSEFEGEERESCNYSCEEESLSNTYGAQWDVFQKQDVSKLLEYIKNHSLELESMDSSKKKVSHPLLEQSYYLDEYHKARLKEEFDVEPWSFDQCVGEAVILPAGCPYQIRKNKSCVNAVLKFLSPEHVSESIKRVKELNQLPQSVKSKANKIEVKKMAIHKISEAVKEIRELTSSDSTGALRLYN</sequence>
<keyword id="KW-0217">Developmental protein</keyword>
<keyword id="KW-0479">Metal-binding</keyword>
<keyword id="KW-0539">Nucleus</keyword>
<keyword id="KW-0560">Oxidoreductase</keyword>
<keyword id="KW-1185">Reference proteome</keyword>
<keyword id="KW-0804">Transcription</keyword>
<keyword id="KW-0805">Transcription regulation</keyword>
<keyword id="KW-0862">Zinc</keyword>
<keyword id="KW-0863">Zinc-finger</keyword>
<dbReference type="EC" id="1.14.11.-" evidence="1"/>
<dbReference type="EMBL" id="EF637083">
    <property type="protein sequence ID" value="ABV21219.1"/>
    <property type="molecule type" value="Genomic_DNA"/>
</dbReference>
<dbReference type="EMBL" id="AL022603">
    <property type="protein sequence ID" value="CAA18707.1"/>
    <property type="status" value="ALT_SEQ"/>
    <property type="molecule type" value="Genomic_DNA"/>
</dbReference>
<dbReference type="EMBL" id="AL031187">
    <property type="protein sequence ID" value="CAA20208.1"/>
    <property type="status" value="ALT_SEQ"/>
    <property type="molecule type" value="Genomic_DNA"/>
</dbReference>
<dbReference type="EMBL" id="AL161555">
    <property type="protein sequence ID" value="CAB81250.1"/>
    <property type="status" value="ALT_SEQ"/>
    <property type="molecule type" value="Genomic_DNA"/>
</dbReference>
<dbReference type="EMBL" id="CP002687">
    <property type="protein sequence ID" value="AEE84450.1"/>
    <property type="molecule type" value="Genomic_DNA"/>
</dbReference>
<dbReference type="EMBL" id="AY142484">
    <property type="protein sequence ID" value="AAN13035.1"/>
    <property type="molecule type" value="mRNA"/>
</dbReference>
<dbReference type="EMBL" id="AB493691">
    <property type="protein sequence ID" value="BAH30529.1"/>
    <property type="molecule type" value="mRNA"/>
</dbReference>
<dbReference type="PIR" id="T05151">
    <property type="entry name" value="T05151"/>
</dbReference>
<dbReference type="RefSeq" id="NP_193874.2">
    <property type="nucleotide sequence ID" value="NM_118263.3"/>
</dbReference>
<dbReference type="SMR" id="Q8H1S7"/>
<dbReference type="FunCoup" id="Q8H1S7">
    <property type="interactions" value="451"/>
</dbReference>
<dbReference type="STRING" id="3702.Q8H1S7"/>
<dbReference type="GlyGen" id="Q8H1S7">
    <property type="glycosylation" value="1 site"/>
</dbReference>
<dbReference type="PaxDb" id="3702-AT4G21430.1"/>
<dbReference type="ProteomicsDB" id="183312"/>
<dbReference type="EnsemblPlants" id="AT4G21430.1">
    <property type="protein sequence ID" value="AT4G21430.1"/>
    <property type="gene ID" value="AT4G21430"/>
</dbReference>
<dbReference type="GeneID" id="827895"/>
<dbReference type="Gramene" id="AT4G21430.1">
    <property type="protein sequence ID" value="AT4G21430.1"/>
    <property type="gene ID" value="AT4G21430"/>
</dbReference>
<dbReference type="KEGG" id="ath:AT4G21430"/>
<dbReference type="Araport" id="AT4G21430"/>
<dbReference type="TAIR" id="AT4G21430">
    <property type="gene designation" value="B160"/>
</dbReference>
<dbReference type="eggNOG" id="KOG1356">
    <property type="taxonomic scope" value="Eukaryota"/>
</dbReference>
<dbReference type="HOGENOM" id="CLU_001811_2_0_1"/>
<dbReference type="InParanoid" id="Q8H1S7"/>
<dbReference type="OMA" id="RQYFMGS"/>
<dbReference type="PRO" id="PR:Q8H1S7"/>
<dbReference type="Proteomes" id="UP000006548">
    <property type="component" value="Chromosome 4"/>
</dbReference>
<dbReference type="ExpressionAtlas" id="Q8H1S7">
    <property type="expression patterns" value="baseline and differential"/>
</dbReference>
<dbReference type="GO" id="GO:0005634">
    <property type="term" value="C:nucleus"/>
    <property type="evidence" value="ECO:0000314"/>
    <property type="project" value="UniProtKB"/>
</dbReference>
<dbReference type="GO" id="GO:0048188">
    <property type="term" value="C:Set1C/COMPASS complex"/>
    <property type="evidence" value="ECO:0000314"/>
    <property type="project" value="TAIR"/>
</dbReference>
<dbReference type="GO" id="GO:0032454">
    <property type="term" value="F:histone H3K9 demethylase activity"/>
    <property type="evidence" value="ECO:0007669"/>
    <property type="project" value="InterPro"/>
</dbReference>
<dbReference type="GO" id="GO:0016491">
    <property type="term" value="F:oxidoreductase activity"/>
    <property type="evidence" value="ECO:0007669"/>
    <property type="project" value="UniProtKB-KW"/>
</dbReference>
<dbReference type="GO" id="GO:0043565">
    <property type="term" value="F:sequence-specific DNA binding"/>
    <property type="evidence" value="ECO:0000314"/>
    <property type="project" value="UniProtKB"/>
</dbReference>
<dbReference type="GO" id="GO:0008270">
    <property type="term" value="F:zinc ion binding"/>
    <property type="evidence" value="ECO:0007669"/>
    <property type="project" value="UniProtKB-KW"/>
</dbReference>
<dbReference type="GO" id="GO:0040029">
    <property type="term" value="P:epigenetic regulation of gene expression"/>
    <property type="evidence" value="ECO:0000315"/>
    <property type="project" value="UniProtKB"/>
</dbReference>
<dbReference type="GO" id="GO:2000028">
    <property type="term" value="P:regulation of photoperiodism, flowering"/>
    <property type="evidence" value="ECO:0000315"/>
    <property type="project" value="UniProtKB"/>
</dbReference>
<dbReference type="GO" id="GO:0045815">
    <property type="term" value="P:transcription initiation-coupled chromatin remodeling"/>
    <property type="evidence" value="ECO:0000315"/>
    <property type="project" value="UniProtKB"/>
</dbReference>
<dbReference type="Gene3D" id="2.60.120.650">
    <property type="entry name" value="Cupin"/>
    <property type="match status" value="1"/>
</dbReference>
<dbReference type="InterPro" id="IPR045109">
    <property type="entry name" value="JHDM2-like"/>
</dbReference>
<dbReference type="InterPro" id="IPR003347">
    <property type="entry name" value="JmjC_dom"/>
</dbReference>
<dbReference type="InterPro" id="IPR014977">
    <property type="entry name" value="WRC_dom"/>
</dbReference>
<dbReference type="InterPro" id="IPR001841">
    <property type="entry name" value="Znf_RING"/>
</dbReference>
<dbReference type="PANTHER" id="PTHR12549">
    <property type="entry name" value="JMJC DOMAIN-CONTAINING HISTONE DEMETHYLATION PROTEIN"/>
    <property type="match status" value="1"/>
</dbReference>
<dbReference type="PANTHER" id="PTHR12549:SF42">
    <property type="entry name" value="LYSINE-SPECIFIC DEMETHYLASE JMJ28"/>
    <property type="match status" value="1"/>
</dbReference>
<dbReference type="Pfam" id="PF02373">
    <property type="entry name" value="JmjC"/>
    <property type="match status" value="1"/>
</dbReference>
<dbReference type="Pfam" id="PF08879">
    <property type="entry name" value="WRC"/>
    <property type="match status" value="1"/>
</dbReference>
<dbReference type="SMART" id="SM00558">
    <property type="entry name" value="JmjC"/>
    <property type="match status" value="1"/>
</dbReference>
<dbReference type="SUPFAM" id="SSF51197">
    <property type="entry name" value="Clavaminate synthase-like"/>
    <property type="match status" value="1"/>
</dbReference>
<dbReference type="PROSITE" id="PS51184">
    <property type="entry name" value="JMJC"/>
    <property type="match status" value="1"/>
</dbReference>
<dbReference type="PROSITE" id="PS51667">
    <property type="entry name" value="WRC"/>
    <property type="match status" value="1"/>
</dbReference>
<dbReference type="PROSITE" id="PS50089">
    <property type="entry name" value="ZF_RING_2"/>
    <property type="match status" value="1"/>
</dbReference>
<proteinExistence type="evidence at protein level"/>
<evidence type="ECO:0000250" key="1">
    <source>
        <dbReference type="UniProtKB" id="O64752"/>
    </source>
</evidence>
<evidence type="ECO:0000250" key="2">
    <source>
        <dbReference type="UniProtKB" id="Q8GUI6"/>
    </source>
</evidence>
<evidence type="ECO:0000255" key="3">
    <source>
        <dbReference type="PROSITE-ProRule" id="PRU00175"/>
    </source>
</evidence>
<evidence type="ECO:0000255" key="4">
    <source>
        <dbReference type="PROSITE-ProRule" id="PRU00538"/>
    </source>
</evidence>
<evidence type="ECO:0000255" key="5">
    <source>
        <dbReference type="PROSITE-ProRule" id="PRU00768"/>
    </source>
</evidence>
<evidence type="ECO:0000255" key="6">
    <source>
        <dbReference type="PROSITE-ProRule" id="PRU01002"/>
    </source>
</evidence>
<evidence type="ECO:0000256" key="7">
    <source>
        <dbReference type="SAM" id="MobiDB-lite"/>
    </source>
</evidence>
<evidence type="ECO:0000269" key="8">
    <source>
    </source>
</evidence>
<evidence type="ECO:0000269" key="9">
    <source>
    </source>
</evidence>
<evidence type="ECO:0000269" key="10">
    <source>
    </source>
</evidence>
<evidence type="ECO:0000303" key="11">
    <source>
    </source>
</evidence>
<evidence type="ECO:0000305" key="12"/>
<evidence type="ECO:0000312" key="13">
    <source>
        <dbReference type="Araport" id="AT4G21430"/>
    </source>
</evidence>
<evidence type="ECO:0000312" key="14">
    <source>
        <dbReference type="EMBL" id="AEE84450.1"/>
    </source>
</evidence>
<evidence type="ECO:0000312" key="15">
    <source>
        <dbReference type="EMBL" id="CAA18707.1"/>
    </source>
</evidence>
<evidence type="ECO:0000312" key="16">
    <source>
        <dbReference type="EMBL" id="CAA20208.1"/>
    </source>
</evidence>
<protein>
    <recommendedName>
        <fullName evidence="11">Lysine-specific demethylase JMJ28</fullName>
        <ecNumber evidence="1">1.14.11.-</ecNumber>
    </recommendedName>
    <alternativeName>
        <fullName evidence="11">Jumonji domain-containing protein 28</fullName>
        <shortName evidence="11">AtJMJ28</shortName>
        <shortName evidence="11">Protein JUMONJI 28</shortName>
    </alternativeName>
    <alternativeName>
        <fullName evidence="11">Lysine-specific histone demethylase JMJ28</fullName>
    </alternativeName>
    <alternativeName>
        <fullName evidence="14">Protein B160</fullName>
    </alternativeName>
    <alternativeName>
        <fullName evidence="12">[histone H3]-trimethyl-L-lysine monodemethylase JMJ28</fullName>
    </alternativeName>
</protein>
<accession>Q8H1S7</accession>
<accession>A7Y5W7</accession>
<accession>O65408</accession>
<reference key="1">
    <citation type="journal article" date="2007" name="Science">
        <title>The evolution of selfing in Arabidopsis thaliana.</title>
        <authorList>
            <person name="Tang C."/>
            <person name="Toomajian C."/>
            <person name="Sherman-Broyles S."/>
            <person name="Plagnol V."/>
            <person name="Guo Y.-L."/>
            <person name="Hu T.T."/>
            <person name="Clark R.M."/>
            <person name="Nasrallah J.B."/>
            <person name="Weigel D."/>
            <person name="Nordborg M."/>
        </authorList>
    </citation>
    <scope>NUCLEOTIDE SEQUENCE [GENOMIC DNA]</scope>
</reference>
<reference key="2">
    <citation type="journal article" date="1999" name="Nature">
        <title>Sequence and analysis of chromosome 4 of the plant Arabidopsis thaliana.</title>
        <authorList>
            <person name="Mayer K.F.X."/>
            <person name="Schueller C."/>
            <person name="Wambutt R."/>
            <person name="Murphy G."/>
            <person name="Volckaert G."/>
            <person name="Pohl T."/>
            <person name="Duesterhoeft A."/>
            <person name="Stiekema W."/>
            <person name="Entian K.-D."/>
            <person name="Terryn N."/>
            <person name="Harris B."/>
            <person name="Ansorge W."/>
            <person name="Brandt P."/>
            <person name="Grivell L.A."/>
            <person name="Rieger M."/>
            <person name="Weichselgartner M."/>
            <person name="de Simone V."/>
            <person name="Obermaier B."/>
            <person name="Mache R."/>
            <person name="Mueller M."/>
            <person name="Kreis M."/>
            <person name="Delseny M."/>
            <person name="Puigdomenech P."/>
            <person name="Watson M."/>
            <person name="Schmidtheini T."/>
            <person name="Reichert B."/>
            <person name="Portetelle D."/>
            <person name="Perez-Alonso M."/>
            <person name="Boutry M."/>
            <person name="Bancroft I."/>
            <person name="Vos P."/>
            <person name="Hoheisel J."/>
            <person name="Zimmermann W."/>
            <person name="Wedler H."/>
            <person name="Ridley P."/>
            <person name="Langham S.-A."/>
            <person name="McCullagh B."/>
            <person name="Bilham L."/>
            <person name="Robben J."/>
            <person name="van der Schueren J."/>
            <person name="Grymonprez B."/>
            <person name="Chuang Y.-J."/>
            <person name="Vandenbussche F."/>
            <person name="Braeken M."/>
            <person name="Weltjens I."/>
            <person name="Voet M."/>
            <person name="Bastiaens I."/>
            <person name="Aert R."/>
            <person name="Defoor E."/>
            <person name="Weitzenegger T."/>
            <person name="Bothe G."/>
            <person name="Ramsperger U."/>
            <person name="Hilbert H."/>
            <person name="Braun M."/>
            <person name="Holzer E."/>
            <person name="Brandt A."/>
            <person name="Peters S."/>
            <person name="van Staveren M."/>
            <person name="Dirkse W."/>
            <person name="Mooijman P."/>
            <person name="Klein Lankhorst R."/>
            <person name="Rose M."/>
            <person name="Hauf J."/>
            <person name="Koetter P."/>
            <person name="Berneiser S."/>
            <person name="Hempel S."/>
            <person name="Feldpausch M."/>
            <person name="Lamberth S."/>
            <person name="Van den Daele H."/>
            <person name="De Keyser A."/>
            <person name="Buysshaert C."/>
            <person name="Gielen J."/>
            <person name="Villarroel R."/>
            <person name="De Clercq R."/>
            <person name="van Montagu M."/>
            <person name="Rogers J."/>
            <person name="Cronin A."/>
            <person name="Quail M.A."/>
            <person name="Bray-Allen S."/>
            <person name="Clark L."/>
            <person name="Doggett J."/>
            <person name="Hall S."/>
            <person name="Kay M."/>
            <person name="Lennard N."/>
            <person name="McLay K."/>
            <person name="Mayes R."/>
            <person name="Pettett A."/>
            <person name="Rajandream M.A."/>
            <person name="Lyne M."/>
            <person name="Benes V."/>
            <person name="Rechmann S."/>
            <person name="Borkova D."/>
            <person name="Bloecker H."/>
            <person name="Scharfe M."/>
            <person name="Grimm M."/>
            <person name="Loehnert T.-H."/>
            <person name="Dose S."/>
            <person name="de Haan M."/>
            <person name="Maarse A.C."/>
            <person name="Schaefer M."/>
            <person name="Mueller-Auer S."/>
            <person name="Gabel C."/>
            <person name="Fuchs M."/>
            <person name="Fartmann B."/>
            <person name="Granderath K."/>
            <person name="Dauner D."/>
            <person name="Herzl A."/>
            <person name="Neumann S."/>
            <person name="Argiriou A."/>
            <person name="Vitale D."/>
            <person name="Liguori R."/>
            <person name="Piravandi E."/>
            <person name="Massenet O."/>
            <person name="Quigley F."/>
            <person name="Clabauld G."/>
            <person name="Muendlein A."/>
            <person name="Felber R."/>
            <person name="Schnabl S."/>
            <person name="Hiller R."/>
            <person name="Schmidt W."/>
            <person name="Lecharny A."/>
            <person name="Aubourg S."/>
            <person name="Chefdor F."/>
            <person name="Cooke R."/>
            <person name="Berger C."/>
            <person name="Monfort A."/>
            <person name="Casacuberta E."/>
            <person name="Gibbons T."/>
            <person name="Weber N."/>
            <person name="Vandenbol M."/>
            <person name="Bargues M."/>
            <person name="Terol J."/>
            <person name="Torres A."/>
            <person name="Perez-Perez A."/>
            <person name="Purnelle B."/>
            <person name="Bent E."/>
            <person name="Johnson S."/>
            <person name="Tacon D."/>
            <person name="Jesse T."/>
            <person name="Heijnen L."/>
            <person name="Schwarz S."/>
            <person name="Scholler P."/>
            <person name="Heber S."/>
            <person name="Francs P."/>
            <person name="Bielke C."/>
            <person name="Frishman D."/>
            <person name="Haase D."/>
            <person name="Lemcke K."/>
            <person name="Mewes H.-W."/>
            <person name="Stocker S."/>
            <person name="Zaccaria P."/>
            <person name="Bevan M."/>
            <person name="Wilson R.K."/>
            <person name="de la Bastide M."/>
            <person name="Habermann K."/>
            <person name="Parnell L."/>
            <person name="Dedhia N."/>
            <person name="Gnoj L."/>
            <person name="Schutz K."/>
            <person name="Huang E."/>
            <person name="Spiegel L."/>
            <person name="Sekhon M."/>
            <person name="Murray J."/>
            <person name="Sheet P."/>
            <person name="Cordes M."/>
            <person name="Abu-Threideh J."/>
            <person name="Stoneking T."/>
            <person name="Kalicki J."/>
            <person name="Graves T."/>
            <person name="Harmon G."/>
            <person name="Edwards J."/>
            <person name="Latreille P."/>
            <person name="Courtney L."/>
            <person name="Cloud J."/>
            <person name="Abbott A."/>
            <person name="Scott K."/>
            <person name="Johnson D."/>
            <person name="Minx P."/>
            <person name="Bentley D."/>
            <person name="Fulton B."/>
            <person name="Miller N."/>
            <person name="Greco T."/>
            <person name="Kemp K."/>
            <person name="Kramer J."/>
            <person name="Fulton L."/>
            <person name="Mardis E."/>
            <person name="Dante M."/>
            <person name="Pepin K."/>
            <person name="Hillier L.W."/>
            <person name="Nelson J."/>
            <person name="Spieth J."/>
            <person name="Ryan E."/>
            <person name="Andrews S."/>
            <person name="Geisel C."/>
            <person name="Layman D."/>
            <person name="Du H."/>
            <person name="Ali J."/>
            <person name="Berghoff A."/>
            <person name="Jones K."/>
            <person name="Drone K."/>
            <person name="Cotton M."/>
            <person name="Joshu C."/>
            <person name="Antonoiu B."/>
            <person name="Zidanic M."/>
            <person name="Strong C."/>
            <person name="Sun H."/>
            <person name="Lamar B."/>
            <person name="Yordan C."/>
            <person name="Ma P."/>
            <person name="Zhong J."/>
            <person name="Preston R."/>
            <person name="Vil D."/>
            <person name="Shekher M."/>
            <person name="Matero A."/>
            <person name="Shah R."/>
            <person name="Swaby I.K."/>
            <person name="O'Shaughnessy A."/>
            <person name="Rodriguez M."/>
            <person name="Hoffman J."/>
            <person name="Till S."/>
            <person name="Granat S."/>
            <person name="Shohdy N."/>
            <person name="Hasegawa A."/>
            <person name="Hameed A."/>
            <person name="Lodhi M."/>
            <person name="Johnson A."/>
            <person name="Chen E."/>
            <person name="Marra M.A."/>
            <person name="Martienssen R."/>
            <person name="McCombie W.R."/>
        </authorList>
    </citation>
    <scope>NUCLEOTIDE SEQUENCE [LARGE SCALE GENOMIC DNA]</scope>
    <source>
        <strain>cv. Columbia</strain>
    </source>
</reference>
<reference key="3">
    <citation type="journal article" date="2017" name="Plant J.">
        <title>Araport11: a complete reannotation of the Arabidopsis thaliana reference genome.</title>
        <authorList>
            <person name="Cheng C.Y."/>
            <person name="Krishnakumar V."/>
            <person name="Chan A.P."/>
            <person name="Thibaud-Nissen F."/>
            <person name="Schobel S."/>
            <person name="Town C.D."/>
        </authorList>
    </citation>
    <scope>GENOME REANNOTATION</scope>
    <source>
        <strain>cv. Columbia</strain>
    </source>
</reference>
<reference key="4">
    <citation type="journal article" date="2003" name="Science">
        <title>Empirical analysis of transcriptional activity in the Arabidopsis genome.</title>
        <authorList>
            <person name="Yamada K."/>
            <person name="Lim J."/>
            <person name="Dale J.M."/>
            <person name="Chen H."/>
            <person name="Shinn P."/>
            <person name="Palm C.J."/>
            <person name="Southwick A.M."/>
            <person name="Wu H.C."/>
            <person name="Kim C.J."/>
            <person name="Nguyen M."/>
            <person name="Pham P.K."/>
            <person name="Cheuk R.F."/>
            <person name="Karlin-Newmann G."/>
            <person name="Liu S.X."/>
            <person name="Lam B."/>
            <person name="Sakano H."/>
            <person name="Wu T."/>
            <person name="Yu G."/>
            <person name="Miranda M."/>
            <person name="Quach H.L."/>
            <person name="Tripp M."/>
            <person name="Chang C.H."/>
            <person name="Lee J.M."/>
            <person name="Toriumi M.J."/>
            <person name="Chan M.M."/>
            <person name="Tang C.C."/>
            <person name="Onodera C.S."/>
            <person name="Deng J.M."/>
            <person name="Akiyama K."/>
            <person name="Ansari Y."/>
            <person name="Arakawa T."/>
            <person name="Banh J."/>
            <person name="Banno F."/>
            <person name="Bowser L."/>
            <person name="Brooks S.Y."/>
            <person name="Carninci P."/>
            <person name="Chao Q."/>
            <person name="Choy N."/>
            <person name="Enju A."/>
            <person name="Goldsmith A.D."/>
            <person name="Gurjal M."/>
            <person name="Hansen N.F."/>
            <person name="Hayashizaki Y."/>
            <person name="Johnson-Hopson C."/>
            <person name="Hsuan V.W."/>
            <person name="Iida K."/>
            <person name="Karnes M."/>
            <person name="Khan S."/>
            <person name="Koesema E."/>
            <person name="Ishida J."/>
            <person name="Jiang P.X."/>
            <person name="Jones T."/>
            <person name="Kawai J."/>
            <person name="Kamiya A."/>
            <person name="Meyers C."/>
            <person name="Nakajima M."/>
            <person name="Narusaka M."/>
            <person name="Seki M."/>
            <person name="Sakurai T."/>
            <person name="Satou M."/>
            <person name="Tamse R."/>
            <person name="Vaysberg M."/>
            <person name="Wallender E.K."/>
            <person name="Wong C."/>
            <person name="Yamamura Y."/>
            <person name="Yuan S."/>
            <person name="Shinozaki K."/>
            <person name="Davis R.W."/>
            <person name="Theologis A."/>
            <person name="Ecker J.R."/>
        </authorList>
    </citation>
    <scope>NUCLEOTIDE SEQUENCE [LARGE SCALE MRNA]</scope>
    <source>
        <strain>cv. Columbia</strain>
    </source>
</reference>
<reference key="5">
    <citation type="submission" date="2009-03" db="EMBL/GenBank/DDBJ databases">
        <title>ORF cloning and analysis of Arabidopsis transcription factor genes.</title>
        <authorList>
            <person name="Fujita M."/>
        </authorList>
    </citation>
    <scope>NUCLEOTIDE SEQUENCE [LARGE SCALE MRNA]</scope>
</reference>
<reference key="6">
    <citation type="journal article" date="2008" name="J. Integr. Plant Biol.">
        <title>Comparative analysis of JmjC domain-containing proteins reveals the potential histone demethylases in Arabidopsis and rice.</title>
        <authorList>
            <person name="Lu F."/>
            <person name="Li G."/>
            <person name="Cui X."/>
            <person name="Liu C."/>
            <person name="Wang X.-J."/>
            <person name="Cao X."/>
        </authorList>
    </citation>
    <scope>GENE FAMILY</scope>
    <scope>NOMENCLATURE</scope>
    <scope>TISSUE SPECIFICITY</scope>
</reference>
<reference key="7">
    <citation type="journal article" date="2017" name="Gene Expr. Patterns">
        <title>JMJ24 antagonizes histone H3K9 demethylase IBM1/JMJ25 function and interacts with RNAi pathways for gene silencing.</title>
        <authorList>
            <person name="Audonnet L."/>
            <person name="Shen Y."/>
            <person name="Zhou D.-X."/>
        </authorList>
    </citation>
    <scope>DISRUPTION PHENOTYPE</scope>
    <scope>TISSUE SPECIFICITY</scope>
    <source>
        <strain>cv. Columbia</strain>
        <strain>cv. Wassilewskija</strain>
    </source>
</reference>
<reference key="8">
    <citation type="journal article" date="2021" name="Plant Cell">
        <title>The Arabidopsis histone demethylase JMJ28 regulates CONSTANS by interacting with FBH transcription factors.</title>
        <authorList>
            <person name="Hung F.-Y."/>
            <person name="Lai Y.-C."/>
            <person name="Wang J."/>
            <person name="Feng Y.-R."/>
            <person name="Shih Y.-H."/>
            <person name="Chen J.-H."/>
            <person name="Sun H.-C."/>
            <person name="Yang S."/>
            <person name="Li C."/>
            <person name="Wu K."/>
        </authorList>
    </citation>
    <scope>FUNCTION</scope>
    <scope>DISRUPTION PHENOTYPE</scope>
    <scope>INTERACTION WITH FBH1; FBH2; FBH3 AND FBH4</scope>
    <scope>TISSUE SPECIFICITY</scope>
    <scope>INDUCTION</scope>
    <scope>SUBCELLULAR LOCATION</scope>
    <source>
        <strain>cv. Columbia</strain>
    </source>
</reference>
<gene>
    <name evidence="11" type="primary">JMJ28</name>
    <name evidence="14" type="synonym">B160</name>
    <name evidence="13" type="ordered locus">At4g21430</name>
    <name evidence="15" type="ORF">F18E5.50</name>
    <name evidence="16" type="ORF">T6K22.160</name>
</gene>
<feature type="chain" id="PRO_0000456194" description="Lysine-specific demethylase JMJ28">
    <location>
        <begin position="1"/>
        <end position="927"/>
    </location>
</feature>
<feature type="domain" description="WRC" evidence="6">
    <location>
        <begin position="7"/>
        <end position="52"/>
    </location>
</feature>
<feature type="domain" description="JmjC" evidence="4">
    <location>
        <begin position="601"/>
        <end position="881"/>
    </location>
</feature>
<feature type="zinc finger region" description="RING-type; degenerate" evidence="3">
    <location>
        <begin position="227"/>
        <end position="273"/>
    </location>
</feature>
<feature type="region of interest" description="Disordered" evidence="7">
    <location>
        <begin position="30"/>
        <end position="92"/>
    </location>
</feature>
<feature type="region of interest" description="Disordered" evidence="7">
    <location>
        <begin position="330"/>
        <end position="359"/>
    </location>
</feature>
<feature type="region of interest" description="Disordered" evidence="7">
    <location>
        <begin position="701"/>
        <end position="736"/>
    </location>
</feature>
<feature type="short sequence motif" description="Nuclear localization signal 1" evidence="5">
    <location>
        <begin position="30"/>
        <end position="37"/>
    </location>
</feature>
<feature type="short sequence motif" description="Nuclear localization signal 2" evidence="5">
    <location>
        <begin position="127"/>
        <end position="134"/>
    </location>
</feature>
<feature type="compositionally biased region" description="Basic residues" evidence="7">
    <location>
        <begin position="80"/>
        <end position="91"/>
    </location>
</feature>
<feature type="compositionally biased region" description="Basic and acidic residues" evidence="7">
    <location>
        <begin position="330"/>
        <end position="339"/>
    </location>
</feature>
<feature type="binding site" evidence="3">
    <location>
        <position position="227"/>
    </location>
    <ligand>
        <name>Zn(2+)</name>
        <dbReference type="ChEBI" id="CHEBI:29105"/>
        <label>1</label>
    </ligand>
</feature>
<feature type="binding site" evidence="3">
    <location>
        <position position="230"/>
    </location>
    <ligand>
        <name>Zn(2+)</name>
        <dbReference type="ChEBI" id="CHEBI:29105"/>
        <label>1</label>
    </ligand>
</feature>
<feature type="binding site" evidence="3">
    <location>
        <position position="241"/>
    </location>
    <ligand>
        <name>Zn(2+)</name>
        <dbReference type="ChEBI" id="CHEBI:29105"/>
        <label>2</label>
    </ligand>
</feature>
<feature type="binding site" evidence="3">
    <location>
        <position position="244"/>
    </location>
    <ligand>
        <name>Zn(2+)</name>
        <dbReference type="ChEBI" id="CHEBI:29105"/>
        <label>2</label>
    </ligand>
</feature>
<feature type="binding site" evidence="3">
    <location>
        <position position="250"/>
    </location>
    <ligand>
        <name>Zn(2+)</name>
        <dbReference type="ChEBI" id="CHEBI:29105"/>
        <label>1</label>
    </ligand>
</feature>
<feature type="binding site" evidence="3">
    <location>
        <position position="253"/>
    </location>
    <ligand>
        <name>Zn(2+)</name>
        <dbReference type="ChEBI" id="CHEBI:29105"/>
        <label>1</label>
    </ligand>
</feature>
<feature type="binding site" evidence="3">
    <location>
        <position position="269"/>
    </location>
    <ligand>
        <name>Zn(2+)</name>
        <dbReference type="ChEBI" id="CHEBI:29105"/>
        <label>2</label>
    </ligand>
</feature>
<feature type="binding site" evidence="3">
    <location>
        <position position="272"/>
    </location>
    <ligand>
        <name>Zn(2+)</name>
        <dbReference type="ChEBI" id="CHEBI:29105"/>
        <label>2</label>
    </ligand>
</feature>
<feature type="sequence conflict" description="In Ref. 1; ABV21219." evidence="12" ref="1">
    <original>V</original>
    <variation>A</variation>
    <location>
        <position position="67"/>
    </location>
</feature>
<feature type="sequence conflict" description="In Ref. 1; ABV21219." evidence="12" ref="1">
    <original>SNN</original>
    <variation>KMK</variation>
    <location>
        <begin position="135"/>
        <end position="137"/>
    </location>
</feature>
<feature type="sequence conflict" description="In Ref. 1; ABV21219." evidence="12" ref="1">
    <original>QRM</original>
    <variation>KRI</variation>
    <location>
        <begin position="370"/>
        <end position="372"/>
    </location>
</feature>
<feature type="sequence conflict" description="In Ref. 1; ABV21219." evidence="12" ref="1">
    <original>E</original>
    <variation>G</variation>
    <location>
        <position position="391"/>
    </location>
</feature>
<feature type="sequence conflict" description="In Ref. 1; ABV21219." evidence="12" ref="1">
    <original>N</original>
    <variation>K</variation>
    <location>
        <position position="404"/>
    </location>
</feature>
<feature type="sequence conflict" description="In Ref. 1; ABV21219." evidence="12" ref="1">
    <original>H</original>
    <variation>Y</variation>
    <location>
        <position position="604"/>
    </location>
</feature>
<feature type="sequence conflict" description="In Ref. 1; ABV21219." evidence="12" ref="1">
    <original>L</original>
    <variation>S</variation>
    <location>
        <position position="923"/>
    </location>
</feature>
<name>JMJ28_ARATH</name>